<keyword id="KW-0106">Calcium</keyword>
<keyword id="KW-0111">Calcium/phospholipid-binding</keyword>
<keyword id="KW-1003">Cell membrane</keyword>
<keyword id="KW-0963">Cytoplasm</keyword>
<keyword id="KW-0472">Membrane</keyword>
<keyword id="KW-0479">Metal-binding</keyword>
<keyword id="KW-0597">Phosphoprotein</keyword>
<keyword id="KW-1185">Reference proteome</keyword>
<keyword id="KW-0677">Repeat</keyword>
<feature type="chain" id="PRO_0000079969" description="Double C2-like domain-containing protein beta">
    <location>
        <begin position="1"/>
        <end position="412"/>
    </location>
</feature>
<feature type="domain" description="C2 1" evidence="2">
    <location>
        <begin position="126"/>
        <end position="250"/>
    </location>
</feature>
<feature type="domain" description="C2 2" evidence="2">
    <location>
        <begin position="266"/>
        <end position="399"/>
    </location>
</feature>
<feature type="region of interest" description="Mediates interaction with DYNLT1" evidence="1">
    <location>
        <begin position="1"/>
        <end position="90"/>
    </location>
</feature>
<feature type="region of interest" description="Negatively regulates targeting to plasma membrane">
    <location>
        <begin position="1"/>
        <end position="36"/>
    </location>
</feature>
<feature type="region of interest" description="Disordered" evidence="3">
    <location>
        <begin position="38"/>
        <end position="123"/>
    </location>
</feature>
<feature type="region of interest" description="Mediates interaction with STXBP3" evidence="4">
    <location>
        <begin position="257"/>
        <end position="375"/>
    </location>
</feature>
<feature type="compositionally biased region" description="Pro residues" evidence="3">
    <location>
        <begin position="43"/>
        <end position="58"/>
    </location>
</feature>
<feature type="compositionally biased region" description="Low complexity" evidence="3">
    <location>
        <begin position="59"/>
        <end position="74"/>
    </location>
</feature>
<feature type="compositionally biased region" description="Pro residues" evidence="3">
    <location>
        <begin position="95"/>
        <end position="108"/>
    </location>
</feature>
<feature type="compositionally biased region" description="Acidic residues" evidence="3">
    <location>
        <begin position="112"/>
        <end position="123"/>
    </location>
</feature>
<feature type="binding site" evidence="2">
    <location>
        <position position="157"/>
    </location>
    <ligand>
        <name>Ca(2+)</name>
        <dbReference type="ChEBI" id="CHEBI:29108"/>
        <label>1</label>
    </ligand>
</feature>
<feature type="binding site" evidence="2">
    <location>
        <position position="163"/>
    </location>
    <ligand>
        <name>Ca(2+)</name>
        <dbReference type="ChEBI" id="CHEBI:29108"/>
        <label>1</label>
    </ligand>
</feature>
<feature type="binding site" evidence="2">
    <location>
        <position position="218"/>
    </location>
    <ligand>
        <name>Ca(2+)</name>
        <dbReference type="ChEBI" id="CHEBI:29108"/>
        <label>1</label>
    </ligand>
</feature>
<feature type="binding site" evidence="2">
    <location>
        <position position="220"/>
    </location>
    <ligand>
        <name>Ca(2+)</name>
        <dbReference type="ChEBI" id="CHEBI:29108"/>
        <label>1</label>
    </ligand>
</feature>
<feature type="binding site" evidence="2">
    <location>
        <position position="297"/>
    </location>
    <ligand>
        <name>Ca(2+)</name>
        <dbReference type="ChEBI" id="CHEBI:29108"/>
        <label>2</label>
    </ligand>
</feature>
<feature type="binding site" evidence="2">
    <location>
        <position position="297"/>
    </location>
    <ligand>
        <name>Ca(2+)</name>
        <dbReference type="ChEBI" id="CHEBI:29108"/>
        <label>3</label>
    </ligand>
</feature>
<feature type="binding site" evidence="2">
    <location>
        <position position="303"/>
    </location>
    <ligand>
        <name>Ca(2+)</name>
        <dbReference type="ChEBI" id="CHEBI:29108"/>
        <label>2</label>
    </ligand>
</feature>
<feature type="binding site" evidence="2">
    <location>
        <position position="357"/>
    </location>
    <ligand>
        <name>Ca(2+)</name>
        <dbReference type="ChEBI" id="CHEBI:29108"/>
        <label>2</label>
    </ligand>
</feature>
<feature type="binding site" evidence="2">
    <location>
        <position position="357"/>
    </location>
    <ligand>
        <name>Ca(2+)</name>
        <dbReference type="ChEBI" id="CHEBI:29108"/>
        <label>3</label>
    </ligand>
</feature>
<feature type="binding site" evidence="2">
    <location>
        <position position="359"/>
    </location>
    <ligand>
        <name>Ca(2+)</name>
        <dbReference type="ChEBI" id="CHEBI:29108"/>
        <label>2</label>
    </ligand>
</feature>
<feature type="binding site" evidence="2">
    <location>
        <position position="359"/>
    </location>
    <ligand>
        <name>Ca(2+)</name>
        <dbReference type="ChEBI" id="CHEBI:29108"/>
        <label>3</label>
    </ligand>
</feature>
<feature type="binding site" evidence="2">
    <location>
        <position position="365"/>
    </location>
    <ligand>
        <name>Ca(2+)</name>
        <dbReference type="ChEBI" id="CHEBI:29108"/>
        <label>3</label>
    </ligand>
</feature>
<feature type="modified residue" description="Phosphoserine" evidence="11">
    <location>
        <position position="411"/>
    </location>
</feature>
<feature type="mutagenesis site" description="Loss of interaction with STX4 and insulin-dependent translocation to the cell membrane; when associated with N-163, N-297 and N-303." evidence="6">
    <original>D</original>
    <variation>N</variation>
    <location>
        <position position="157"/>
    </location>
</feature>
<feature type="mutagenesis site" description="Loss of interaction with STX4 and insulin-dependent translocation to the cell membrane; when associated with N-157, N-297 and N-303." evidence="6">
    <original>D</original>
    <variation>N</variation>
    <location>
        <position position="163"/>
    </location>
</feature>
<feature type="mutagenesis site" description="Loss of interaction with STX4 and insulin-dependent translocation to the cell membrane; when associated with N-157, N-163 and N-303." evidence="6">
    <original>D</original>
    <variation>N</variation>
    <location>
        <position position="297"/>
    </location>
</feature>
<feature type="mutagenesis site" description="Loss of interaction with STX4 and insulin-dependent translocation to the cell membrane; when associated with N-157, N-163 and N-297." evidence="6">
    <original>D</original>
    <variation>N</variation>
    <location>
        <position position="303"/>
    </location>
</feature>
<feature type="sequence conflict" description="In Ref. 1; BAA12714." evidence="10" ref="1">
    <original>K</original>
    <variation>N</variation>
    <location>
        <position position="389"/>
    </location>
</feature>
<proteinExistence type="evidence at protein level"/>
<evidence type="ECO:0000250" key="1"/>
<evidence type="ECO:0000255" key="2">
    <source>
        <dbReference type="PROSITE-ProRule" id="PRU00041"/>
    </source>
</evidence>
<evidence type="ECO:0000256" key="3">
    <source>
        <dbReference type="SAM" id="MobiDB-lite"/>
    </source>
</evidence>
<evidence type="ECO:0000269" key="4">
    <source>
    </source>
</evidence>
<evidence type="ECO:0000269" key="5">
    <source>
    </source>
</evidence>
<evidence type="ECO:0000269" key="6">
    <source>
    </source>
</evidence>
<evidence type="ECO:0000269" key="7">
    <source>
    </source>
</evidence>
<evidence type="ECO:0000269" key="8">
    <source>
    </source>
</evidence>
<evidence type="ECO:0000269" key="9">
    <source>
    </source>
</evidence>
<evidence type="ECO:0000305" key="10"/>
<evidence type="ECO:0007744" key="11">
    <source>
    </source>
</evidence>
<sequence>MTLRRRGEKATISIQEHMAIDVCPGPIRPIKQISDYFPRFPRGLPPTAAPRAPAPPDAPARSPAASASPRSPSDGARDDDEDVDQLFGAYGASPGPSPGPSPARPPAKPPEDEPDVDGYESDDCTALGTLDFSLLYDQENNALHCTISKAKGLKPMDHNGLADPYVKLHLLPGASKANKLRTKTLRNTLNPSWNETLTYYGITDEDMVRKTLRISVCDEDKFRHNEFIGETRVPLKKLKPNHTKTFSICLEKQLPVDKAEDKSLEERGRILISLKYSSQKQGLLVGIVRCAHLAAMDANGYSDPYVKTYLKPDVDKKSKHKTAVKKKTLNPEFNEEFCYEIKHGDLAKKTLEVTVWDYDIGKSNDFIGGVVLGINAKGERLKHWFDCLKNKDKRIERWHTLTNELPGAVLSD</sequence>
<organism>
    <name type="scientific">Mus musculus</name>
    <name type="common">Mouse</name>
    <dbReference type="NCBI Taxonomy" id="10090"/>
    <lineage>
        <taxon>Eukaryota</taxon>
        <taxon>Metazoa</taxon>
        <taxon>Chordata</taxon>
        <taxon>Craniata</taxon>
        <taxon>Vertebrata</taxon>
        <taxon>Euteleostomi</taxon>
        <taxon>Mammalia</taxon>
        <taxon>Eutheria</taxon>
        <taxon>Euarchontoglires</taxon>
        <taxon>Glires</taxon>
        <taxon>Rodentia</taxon>
        <taxon>Myomorpha</taxon>
        <taxon>Muroidea</taxon>
        <taxon>Muridae</taxon>
        <taxon>Murinae</taxon>
        <taxon>Mus</taxon>
        <taxon>Mus</taxon>
    </lineage>
</organism>
<dbReference type="EMBL" id="D85037">
    <property type="protein sequence ID" value="BAA12714.1"/>
    <property type="molecule type" value="mRNA"/>
</dbReference>
<dbReference type="EMBL" id="AL669897">
    <property type="status" value="NOT_ANNOTATED_CDS"/>
    <property type="molecule type" value="Genomic_DNA"/>
</dbReference>
<dbReference type="EMBL" id="CH466596">
    <property type="protein sequence ID" value="EDL12842.1"/>
    <property type="molecule type" value="Genomic_DNA"/>
</dbReference>
<dbReference type="EMBL" id="BC067030">
    <property type="protein sequence ID" value="AAH67030.1"/>
    <property type="molecule type" value="mRNA"/>
</dbReference>
<dbReference type="CCDS" id="CCDS25057.1"/>
<dbReference type="PIR" id="JC4921">
    <property type="entry name" value="JC4921"/>
</dbReference>
<dbReference type="RefSeq" id="NP_031899.2">
    <property type="nucleotide sequence ID" value="NM_007873.3"/>
</dbReference>
<dbReference type="SMR" id="P70169"/>
<dbReference type="BioGRID" id="199266">
    <property type="interactions" value="2"/>
</dbReference>
<dbReference type="FunCoup" id="P70169">
    <property type="interactions" value="152"/>
</dbReference>
<dbReference type="STRING" id="10090.ENSMUSP00000021209"/>
<dbReference type="iPTMnet" id="P70169"/>
<dbReference type="PhosphoSitePlus" id="P70169"/>
<dbReference type="SwissPalm" id="P70169"/>
<dbReference type="PaxDb" id="10090-ENSMUSP00000021209"/>
<dbReference type="PeptideAtlas" id="P70169"/>
<dbReference type="ProteomicsDB" id="279795"/>
<dbReference type="ABCD" id="P70169">
    <property type="antibodies" value="1 sequenced antibody"/>
</dbReference>
<dbReference type="Antibodypedia" id="71704">
    <property type="antibodies" value="75 antibodies from 20 providers"/>
</dbReference>
<dbReference type="DNASU" id="13447"/>
<dbReference type="Ensembl" id="ENSMUST00000021209.8">
    <property type="protein sequence ID" value="ENSMUSP00000021209.8"/>
    <property type="gene ID" value="ENSMUSG00000020848.8"/>
</dbReference>
<dbReference type="GeneID" id="13447"/>
<dbReference type="KEGG" id="mmu:13447"/>
<dbReference type="UCSC" id="uc007kev.1">
    <property type="organism name" value="mouse"/>
</dbReference>
<dbReference type="AGR" id="MGI:1100497"/>
<dbReference type="CTD" id="8447"/>
<dbReference type="MGI" id="MGI:1100497">
    <property type="gene designation" value="Doc2b"/>
</dbReference>
<dbReference type="VEuPathDB" id="HostDB:ENSMUSG00000020848"/>
<dbReference type="eggNOG" id="KOG1013">
    <property type="taxonomic scope" value="Eukaryota"/>
</dbReference>
<dbReference type="GeneTree" id="ENSGT00940000156758"/>
<dbReference type="HOGENOM" id="CLU_023008_3_0_1"/>
<dbReference type="InParanoid" id="P70169"/>
<dbReference type="OMA" id="DKKMERW"/>
<dbReference type="OrthoDB" id="270970at2759"/>
<dbReference type="PhylomeDB" id="P70169"/>
<dbReference type="TreeFam" id="TF351844"/>
<dbReference type="BioGRID-ORCS" id="13447">
    <property type="hits" value="3 hits in 76 CRISPR screens"/>
</dbReference>
<dbReference type="ChiTaRS" id="Doc2b">
    <property type="organism name" value="mouse"/>
</dbReference>
<dbReference type="PRO" id="PR:P70169"/>
<dbReference type="Proteomes" id="UP000000589">
    <property type="component" value="Chromosome 11"/>
</dbReference>
<dbReference type="RNAct" id="P70169">
    <property type="molecule type" value="protein"/>
</dbReference>
<dbReference type="Bgee" id="ENSMUSG00000020848">
    <property type="expression patterns" value="Expressed in subiculum and 127 other cell types or tissues"/>
</dbReference>
<dbReference type="GO" id="GO:0005737">
    <property type="term" value="C:cytoplasm"/>
    <property type="evidence" value="ECO:0000314"/>
    <property type="project" value="UniProtKB"/>
</dbReference>
<dbReference type="GO" id="GO:0005886">
    <property type="term" value="C:plasma membrane"/>
    <property type="evidence" value="ECO:0000314"/>
    <property type="project" value="UniProtKB"/>
</dbReference>
<dbReference type="GO" id="GO:0098793">
    <property type="term" value="C:presynapse"/>
    <property type="evidence" value="ECO:0007669"/>
    <property type="project" value="GOC"/>
</dbReference>
<dbReference type="GO" id="GO:0005509">
    <property type="term" value="F:calcium ion binding"/>
    <property type="evidence" value="ECO:0000314"/>
    <property type="project" value="MGI"/>
</dbReference>
<dbReference type="GO" id="GO:0005544">
    <property type="term" value="F:calcium-dependent phospholipid binding"/>
    <property type="evidence" value="ECO:0000250"/>
    <property type="project" value="UniProtKB"/>
</dbReference>
<dbReference type="GO" id="GO:0019905">
    <property type="term" value="F:syntaxin binding"/>
    <property type="evidence" value="ECO:0000353"/>
    <property type="project" value="UniProtKB"/>
</dbReference>
<dbReference type="GO" id="GO:0048791">
    <property type="term" value="P:calcium ion-regulated exocytosis of neurotransmitter"/>
    <property type="evidence" value="ECO:0000315"/>
    <property type="project" value="UniProtKB"/>
</dbReference>
<dbReference type="GO" id="GO:0099502">
    <property type="term" value="P:calcium-dependent activation of synaptic vesicle fusion"/>
    <property type="evidence" value="ECO:0000314"/>
    <property type="project" value="SynGO"/>
</dbReference>
<dbReference type="GO" id="GO:0045956">
    <property type="term" value="P:positive regulation of calcium ion-dependent exocytosis"/>
    <property type="evidence" value="ECO:0000250"/>
    <property type="project" value="UniProtKB"/>
</dbReference>
<dbReference type="GO" id="GO:0032024">
    <property type="term" value="P:positive regulation of insulin secretion"/>
    <property type="evidence" value="ECO:0000315"/>
    <property type="project" value="UniProtKB"/>
</dbReference>
<dbReference type="GO" id="GO:0031340">
    <property type="term" value="P:positive regulation of vesicle fusion"/>
    <property type="evidence" value="ECO:0000250"/>
    <property type="project" value="UniProtKB"/>
</dbReference>
<dbReference type="GO" id="GO:0008104">
    <property type="term" value="P:protein localization"/>
    <property type="evidence" value="ECO:0000315"/>
    <property type="project" value="UniProtKB"/>
</dbReference>
<dbReference type="GO" id="GO:0061669">
    <property type="term" value="P:spontaneous neurotransmitter secretion"/>
    <property type="evidence" value="ECO:0000314"/>
    <property type="project" value="MGI"/>
</dbReference>
<dbReference type="CDD" id="cd04035">
    <property type="entry name" value="C2A_Rabphilin_Doc2"/>
    <property type="match status" value="1"/>
</dbReference>
<dbReference type="CDD" id="cd08384">
    <property type="entry name" value="C2B_Rabphilin_Doc2"/>
    <property type="match status" value="1"/>
</dbReference>
<dbReference type="FunFam" id="2.60.40.150:FF:000032">
    <property type="entry name" value="Double c2-like domain-containing"/>
    <property type="match status" value="1"/>
</dbReference>
<dbReference type="FunFam" id="2.60.40.150:FF:000023">
    <property type="entry name" value="Double C2-like domain-containing protein"/>
    <property type="match status" value="1"/>
</dbReference>
<dbReference type="Gene3D" id="2.60.40.150">
    <property type="entry name" value="C2 domain"/>
    <property type="match status" value="2"/>
</dbReference>
<dbReference type="InterPro" id="IPR000008">
    <property type="entry name" value="C2_dom"/>
</dbReference>
<dbReference type="InterPro" id="IPR035892">
    <property type="entry name" value="C2_domain_sf"/>
</dbReference>
<dbReference type="InterPro" id="IPR014638">
    <property type="entry name" value="Doc2"/>
</dbReference>
<dbReference type="InterPro" id="IPR043566">
    <property type="entry name" value="Rabphilin/DOC2/Noc2"/>
</dbReference>
<dbReference type="InterPro" id="IPR047022">
    <property type="entry name" value="Rabphilin_Doc2_C2A"/>
</dbReference>
<dbReference type="InterPro" id="IPR001565">
    <property type="entry name" value="Synaptotagmin"/>
</dbReference>
<dbReference type="PANTHER" id="PTHR45729:SF9">
    <property type="entry name" value="DOUBLE C2-LIKE DOMAIN-CONTAINING PROTEIN BETA"/>
    <property type="match status" value="1"/>
</dbReference>
<dbReference type="PANTHER" id="PTHR45729">
    <property type="entry name" value="RABPHILIN, ISOFORM A"/>
    <property type="match status" value="1"/>
</dbReference>
<dbReference type="Pfam" id="PF00168">
    <property type="entry name" value="C2"/>
    <property type="match status" value="2"/>
</dbReference>
<dbReference type="PIRSF" id="PIRSF036931">
    <property type="entry name" value="Doc2"/>
    <property type="match status" value="1"/>
</dbReference>
<dbReference type="PRINTS" id="PR00360">
    <property type="entry name" value="C2DOMAIN"/>
</dbReference>
<dbReference type="PRINTS" id="PR00399">
    <property type="entry name" value="SYNAPTOTAGMN"/>
</dbReference>
<dbReference type="SMART" id="SM00239">
    <property type="entry name" value="C2"/>
    <property type="match status" value="2"/>
</dbReference>
<dbReference type="SUPFAM" id="SSF49562">
    <property type="entry name" value="C2 domain (Calcium/lipid-binding domain, CaLB)"/>
    <property type="match status" value="2"/>
</dbReference>
<dbReference type="PROSITE" id="PS50004">
    <property type="entry name" value="C2"/>
    <property type="match status" value="2"/>
</dbReference>
<protein>
    <recommendedName>
        <fullName>Double C2-like domain-containing protein beta</fullName>
        <shortName>Doc2-beta</shortName>
    </recommendedName>
</protein>
<accession>P70169</accession>
<accession>Q5SS41</accession>
<accession>Q6NXK3</accession>
<reference key="1">
    <citation type="journal article" date="1996" name="J. Biochem.">
        <title>Calcium-dependent phospholipid binding to the C2A domain of a ubiquitous form of double C2 protein (Doc2 beta).</title>
        <authorList>
            <person name="Kojima T."/>
            <person name="Fukuda M."/>
            <person name="Aruga J."/>
            <person name="Mikoshiba K."/>
        </authorList>
    </citation>
    <scope>NUCLEOTIDE SEQUENCE [MRNA]</scope>
    <scope>FUNCTION</scope>
    <scope>TISSUE SPECIFICITY</scope>
    <source>
        <tissue>Cerebellum</tissue>
    </source>
</reference>
<reference key="2">
    <citation type="journal article" date="2009" name="PLoS Biol.">
        <title>Lineage-specific biology revealed by a finished genome assembly of the mouse.</title>
        <authorList>
            <person name="Church D.M."/>
            <person name="Goodstadt L."/>
            <person name="Hillier L.W."/>
            <person name="Zody M.C."/>
            <person name="Goldstein S."/>
            <person name="She X."/>
            <person name="Bult C.J."/>
            <person name="Agarwala R."/>
            <person name="Cherry J.L."/>
            <person name="DiCuccio M."/>
            <person name="Hlavina W."/>
            <person name="Kapustin Y."/>
            <person name="Meric P."/>
            <person name="Maglott D."/>
            <person name="Birtle Z."/>
            <person name="Marques A.C."/>
            <person name="Graves T."/>
            <person name="Zhou S."/>
            <person name="Teague B."/>
            <person name="Potamousis K."/>
            <person name="Churas C."/>
            <person name="Place M."/>
            <person name="Herschleb J."/>
            <person name="Runnheim R."/>
            <person name="Forrest D."/>
            <person name="Amos-Landgraf J."/>
            <person name="Schwartz D.C."/>
            <person name="Cheng Z."/>
            <person name="Lindblad-Toh K."/>
            <person name="Eichler E.E."/>
            <person name="Ponting C.P."/>
        </authorList>
    </citation>
    <scope>NUCLEOTIDE SEQUENCE [LARGE SCALE GENOMIC DNA]</scope>
    <source>
        <strain>C57BL/6J</strain>
    </source>
</reference>
<reference key="3">
    <citation type="submission" date="2005-07" db="EMBL/GenBank/DDBJ databases">
        <authorList>
            <person name="Mural R.J."/>
            <person name="Adams M.D."/>
            <person name="Myers E.W."/>
            <person name="Smith H.O."/>
            <person name="Venter J.C."/>
        </authorList>
    </citation>
    <scope>NUCLEOTIDE SEQUENCE [LARGE SCALE GENOMIC DNA]</scope>
</reference>
<reference key="4">
    <citation type="journal article" date="2004" name="Genome Res.">
        <title>The status, quality, and expansion of the NIH full-length cDNA project: the Mammalian Gene Collection (MGC).</title>
        <authorList>
            <consortium name="The MGC Project Team"/>
        </authorList>
    </citation>
    <scope>NUCLEOTIDE SEQUENCE [LARGE SCALE MRNA]</scope>
    <source>
        <strain>C57BL/6J</strain>
        <tissue>Brain</tissue>
    </source>
</reference>
<reference key="5">
    <citation type="journal article" date="2007" name="J. Biol. Chem.">
        <title>Doc2beta is a novel Munc18c-interacting partner and positive effector of syntaxin 4-mediated exocytosis.</title>
        <authorList>
            <person name="Ke B."/>
            <person name="Oh E."/>
            <person name="Thurmond D.C."/>
        </authorList>
    </citation>
    <scope>SUBCELLULAR LOCATION</scope>
    <scope>INTERACTION WITH STXBP3</scope>
    <scope>TISSUE SPECIFICITY</scope>
</reference>
<reference key="6">
    <citation type="journal article" date="2008" name="J. Neurosci.">
        <title>DOC2B acts as a calcium switch and enhances vesicle fusion.</title>
        <authorList>
            <person name="Friedrich R."/>
            <person name="Groffen A.J."/>
            <person name="Connell E."/>
            <person name="van Weering J.R."/>
            <person name="Gutman O."/>
            <person name="Henis Y.I."/>
            <person name="Davletov B."/>
            <person name="Ashery U."/>
        </authorList>
    </citation>
    <scope>INTERACTION WITH STX1A AND SNAP25</scope>
</reference>
<reference key="7">
    <citation type="journal article" date="2009" name="Biochem. Biophys. Res. Commun.">
        <title>DOC2b is a SNARE regulator of glucose-stimulated delayed insulin secretion.</title>
        <authorList>
            <person name="Miyazaki M."/>
            <person name="Emoto M."/>
            <person name="Fukuda N."/>
            <person name="Hatanaka M."/>
            <person name="Taguchi A."/>
            <person name="Miyamoto S."/>
            <person name="Tanizawa Y."/>
        </authorList>
    </citation>
    <scope>FUNCTION</scope>
    <scope>SUBCELLULAR LOCATION</scope>
    <scope>INTERACTION WITH STX4</scope>
</reference>
<reference key="8">
    <citation type="journal article" date="2009" name="Diabetes">
        <title>DOC2B: a novel syntaxin-4 binding protein mediating insulin-regulated GLUT4 vesicle fusion in adipocytes.</title>
        <authorList>
            <person name="Fukuda N."/>
            <person name="Emoto M."/>
            <person name="Nakamori Y."/>
            <person name="Taguchi A."/>
            <person name="Miyamoto S."/>
            <person name="Uraki S."/>
            <person name="Oka Y."/>
            <person name="Tanizawa Y."/>
        </authorList>
    </citation>
    <scope>FUNCTION</scope>
    <scope>SUBCELLULAR LOCATION</scope>
    <scope>INTERACTION WITH STX4</scope>
    <scope>MUTAGENESIS OF ASP-157; ASP-163; ASP-297 AND ASP-303</scope>
</reference>
<reference key="9">
    <citation type="journal article" date="2010" name="Cell">
        <title>A tissue-specific atlas of mouse protein phosphorylation and expression.</title>
        <authorList>
            <person name="Huttlin E.L."/>
            <person name="Jedrychowski M.P."/>
            <person name="Elias J.E."/>
            <person name="Goswami T."/>
            <person name="Rad R."/>
            <person name="Beausoleil S.A."/>
            <person name="Villen J."/>
            <person name="Haas W."/>
            <person name="Sowa M.E."/>
            <person name="Gygi S.P."/>
        </authorList>
    </citation>
    <scope>PHOSPHORYLATION [LARGE SCALE ANALYSIS] AT SER-411</scope>
    <scope>IDENTIFICATION BY MASS SPECTROMETRY [LARGE SCALE ANALYSIS]</scope>
    <source>
        <tissue>Brain</tissue>
    </source>
</reference>
<reference key="10">
    <citation type="journal article" date="2010" name="Science">
        <title>Doc2b is a high-affinity Ca2+ sensor for spontaneous neurotransmitter release.</title>
        <authorList>
            <person name="Groffen A.J."/>
            <person name="Martens S."/>
            <person name="Diez Arazola R."/>
            <person name="Cornelisse L.N."/>
            <person name="Lozovaya N."/>
            <person name="de Jong A.P."/>
            <person name="Goriounova N.A."/>
            <person name="Habets R.L."/>
            <person name="Takai Y."/>
            <person name="Borst J.G."/>
            <person name="Brose N."/>
            <person name="McMahon H.T."/>
            <person name="Verhage M."/>
        </authorList>
    </citation>
    <scope>DISRUPTION PHENOTYPE</scope>
    <scope>FUNCTION</scope>
</reference>
<gene>
    <name type="primary">Doc2b</name>
</gene>
<name>DOC2B_MOUSE</name>
<comment type="function">
    <text evidence="6 7 8 9">Calcium sensor which positively regulates SNARE-dependent fusion of vesicles with membranes. Binds phospholipids in a calcium-dependent manner and may act at the priming stage of fusion by modifying membrane curvature to stimulate fusion. Involved in calcium-triggered exocytosis in chromaffin cells and calcium-dependent spontaneous release of neurotransmitter in absence of action potentials in neuronal cells. Involved both in glucose-stimulated insulin secretion in pancreatic cells and insulin-dependent GLUT4 transport to the plasma membrane in adipocytes.</text>
</comment>
<comment type="cofactor">
    <cofactor evidence="2">
        <name>Ca(2+)</name>
        <dbReference type="ChEBI" id="CHEBI:29108"/>
    </cofactor>
</comment>
<comment type="subunit">
    <text evidence="1 4 5 6 7">Interacts with cytoplasmic dynein light chain DYNLT1. May interact with UNC13A; the interaction mediates targeting to the plasma membrane (By similarity). Probably interacts with the SNARE (soluble N-ethylmaleimide-sensitive factor attached protein receptor) complex composed of SNAP25, STX1A and VAMP2; the interaction is calcium-dependent and competitive with SYT1. Interacts with STX4; the interaction is calcium-dependent, increased by insulin and glucose, and mediates vesicle fusion with plasma membrane in pancreatic cells and adipocytes. Interacts with STXBP3; the interaction is direct, occurs at the cell membrane and regulates glucose-stimulated insulin secretion.</text>
</comment>
<comment type="subcellular location">
    <subcellularLocation>
        <location>Cytoplasm</location>
    </subcellularLocation>
    <subcellularLocation>
        <location>Cytoplasmic granule</location>
    </subcellularLocation>
    <subcellularLocation>
        <location>Cell membrane</location>
        <topology>Peripheral membrane protein</topology>
    </subcellularLocation>
    <text>Translocates to the plasma membrane in a calcium-dependent manner.</text>
</comment>
<comment type="tissue specificity">
    <text evidence="4 9">Widely expressed. Expressed in pancreatic islet cells (at protein level).</text>
</comment>
<comment type="domain">
    <text>C2 domain 1 is involved in binding calcium and phospholipids. According to PubMed:19033398, the C2 domain 2 may also play a role in the calcium-dependent targeting to membranes.</text>
</comment>
<comment type="disruption phenotype">
    <text evidence="8">Mice are viable and fertile without gross abnormalities.</text>
</comment>